<protein>
    <recommendedName>
        <fullName evidence="1">Glycine cleavage system H protein</fullName>
    </recommendedName>
</protein>
<proteinExistence type="inferred from homology"/>
<gene>
    <name evidence="1" type="primary">gcvH</name>
    <name type="ordered locus">KRH_15100</name>
</gene>
<organism>
    <name type="scientific">Kocuria rhizophila (strain ATCC 9341 / DSM 348 / NBRC 103217 / DC2201)</name>
    <dbReference type="NCBI Taxonomy" id="378753"/>
    <lineage>
        <taxon>Bacteria</taxon>
        <taxon>Bacillati</taxon>
        <taxon>Actinomycetota</taxon>
        <taxon>Actinomycetes</taxon>
        <taxon>Micrococcales</taxon>
        <taxon>Micrococcaceae</taxon>
        <taxon>Kocuria</taxon>
    </lineage>
</organism>
<sequence length="128" mass="13826">MTNIPAELAYTAEHEWVQDLSEDSTFKVGITDHAQSELGEVVFVQLPEVGDTVTAGDVVGEIESTKSVSDLFAPVTGEIVSVNDELADNPGLLNEAPYEAGWLFTVRVESQDATAQLLDAQAYQQLLD</sequence>
<accession>B2GK12</accession>
<keyword id="KW-0450">Lipoyl</keyword>
<keyword id="KW-1185">Reference proteome</keyword>
<name>GCSH_KOCRD</name>
<dbReference type="EMBL" id="AP009152">
    <property type="protein sequence ID" value="BAG29857.1"/>
    <property type="molecule type" value="Genomic_DNA"/>
</dbReference>
<dbReference type="RefSeq" id="WP_012398578.1">
    <property type="nucleotide sequence ID" value="NC_010617.1"/>
</dbReference>
<dbReference type="SMR" id="B2GK12"/>
<dbReference type="STRING" id="378753.KRH_15100"/>
<dbReference type="KEGG" id="krh:KRH_15100"/>
<dbReference type="eggNOG" id="COG0509">
    <property type="taxonomic scope" value="Bacteria"/>
</dbReference>
<dbReference type="HOGENOM" id="CLU_097408_2_2_11"/>
<dbReference type="OrthoDB" id="9796712at2"/>
<dbReference type="Proteomes" id="UP000008838">
    <property type="component" value="Chromosome"/>
</dbReference>
<dbReference type="GO" id="GO:0005829">
    <property type="term" value="C:cytosol"/>
    <property type="evidence" value="ECO:0007669"/>
    <property type="project" value="TreeGrafter"/>
</dbReference>
<dbReference type="GO" id="GO:0005960">
    <property type="term" value="C:glycine cleavage complex"/>
    <property type="evidence" value="ECO:0007669"/>
    <property type="project" value="InterPro"/>
</dbReference>
<dbReference type="GO" id="GO:0019464">
    <property type="term" value="P:glycine decarboxylation via glycine cleavage system"/>
    <property type="evidence" value="ECO:0007669"/>
    <property type="project" value="UniProtKB-UniRule"/>
</dbReference>
<dbReference type="CDD" id="cd06848">
    <property type="entry name" value="GCS_H"/>
    <property type="match status" value="1"/>
</dbReference>
<dbReference type="Gene3D" id="2.40.50.100">
    <property type="match status" value="1"/>
</dbReference>
<dbReference type="HAMAP" id="MF_00272">
    <property type="entry name" value="GcvH"/>
    <property type="match status" value="1"/>
</dbReference>
<dbReference type="InterPro" id="IPR003016">
    <property type="entry name" value="2-oxoA_DH_lipoyl-BS"/>
</dbReference>
<dbReference type="InterPro" id="IPR000089">
    <property type="entry name" value="Biotin_lipoyl"/>
</dbReference>
<dbReference type="InterPro" id="IPR002930">
    <property type="entry name" value="GCV_H"/>
</dbReference>
<dbReference type="InterPro" id="IPR033753">
    <property type="entry name" value="GCV_H/Fam206"/>
</dbReference>
<dbReference type="InterPro" id="IPR017453">
    <property type="entry name" value="GCV_H_sub"/>
</dbReference>
<dbReference type="InterPro" id="IPR011053">
    <property type="entry name" value="Single_hybrid_motif"/>
</dbReference>
<dbReference type="NCBIfam" id="TIGR00527">
    <property type="entry name" value="gcvH"/>
    <property type="match status" value="1"/>
</dbReference>
<dbReference type="NCBIfam" id="NF002270">
    <property type="entry name" value="PRK01202.1"/>
    <property type="match status" value="1"/>
</dbReference>
<dbReference type="PANTHER" id="PTHR11715">
    <property type="entry name" value="GLYCINE CLEAVAGE SYSTEM H PROTEIN"/>
    <property type="match status" value="1"/>
</dbReference>
<dbReference type="PANTHER" id="PTHR11715:SF3">
    <property type="entry name" value="GLYCINE CLEAVAGE SYSTEM H PROTEIN-RELATED"/>
    <property type="match status" value="1"/>
</dbReference>
<dbReference type="Pfam" id="PF01597">
    <property type="entry name" value="GCV_H"/>
    <property type="match status" value="1"/>
</dbReference>
<dbReference type="SUPFAM" id="SSF51230">
    <property type="entry name" value="Single hybrid motif"/>
    <property type="match status" value="1"/>
</dbReference>
<dbReference type="PROSITE" id="PS50968">
    <property type="entry name" value="BIOTINYL_LIPOYL"/>
    <property type="match status" value="1"/>
</dbReference>
<dbReference type="PROSITE" id="PS00189">
    <property type="entry name" value="LIPOYL"/>
    <property type="match status" value="1"/>
</dbReference>
<feature type="chain" id="PRO_1000114524" description="Glycine cleavage system H protein">
    <location>
        <begin position="1"/>
        <end position="128"/>
    </location>
</feature>
<feature type="domain" description="Lipoyl-binding" evidence="2">
    <location>
        <begin position="25"/>
        <end position="107"/>
    </location>
</feature>
<feature type="modified residue" description="N6-lipoyllysine" evidence="1">
    <location>
        <position position="66"/>
    </location>
</feature>
<evidence type="ECO:0000255" key="1">
    <source>
        <dbReference type="HAMAP-Rule" id="MF_00272"/>
    </source>
</evidence>
<evidence type="ECO:0000255" key="2">
    <source>
        <dbReference type="PROSITE-ProRule" id="PRU01066"/>
    </source>
</evidence>
<reference key="1">
    <citation type="journal article" date="2008" name="J. Bacteriol.">
        <title>Complete genome sequence of the soil actinomycete Kocuria rhizophila.</title>
        <authorList>
            <person name="Takarada H."/>
            <person name="Sekine M."/>
            <person name="Kosugi H."/>
            <person name="Matsuo Y."/>
            <person name="Fujisawa T."/>
            <person name="Omata S."/>
            <person name="Kishi E."/>
            <person name="Shimizu A."/>
            <person name="Tsukatani N."/>
            <person name="Tanikawa S."/>
            <person name="Fujita N."/>
            <person name="Harayama S."/>
        </authorList>
    </citation>
    <scope>NUCLEOTIDE SEQUENCE [LARGE SCALE GENOMIC DNA]</scope>
    <source>
        <strain>ATCC 9341 / DSM 348 / NBRC 103217 / DC2201</strain>
    </source>
</reference>
<comment type="function">
    <text evidence="1">The glycine cleavage system catalyzes the degradation of glycine. The H protein shuttles the methylamine group of glycine from the P protein to the T protein.</text>
</comment>
<comment type="cofactor">
    <cofactor evidence="1">
        <name>(R)-lipoate</name>
        <dbReference type="ChEBI" id="CHEBI:83088"/>
    </cofactor>
    <text evidence="1">Binds 1 lipoyl cofactor covalently.</text>
</comment>
<comment type="subunit">
    <text evidence="1">The glycine cleavage system is composed of four proteins: P, T, L and H.</text>
</comment>
<comment type="similarity">
    <text evidence="1">Belongs to the GcvH family.</text>
</comment>